<name>SSRP_LIMRJ</name>
<evidence type="ECO:0000255" key="1">
    <source>
        <dbReference type="HAMAP-Rule" id="MF_00023"/>
    </source>
</evidence>
<keyword id="KW-0963">Cytoplasm</keyword>
<keyword id="KW-0694">RNA-binding</keyword>
<feature type="chain" id="PRO_1000090160" description="SsrA-binding protein">
    <location>
        <begin position="1"/>
        <end position="157"/>
    </location>
</feature>
<accession>B2G624</accession>
<organism>
    <name type="scientific">Limosilactobacillus reuteri subsp. reuteri (strain JCM 1112)</name>
    <name type="common">Lactobacillus reuteri</name>
    <dbReference type="NCBI Taxonomy" id="557433"/>
    <lineage>
        <taxon>Bacteria</taxon>
        <taxon>Bacillati</taxon>
        <taxon>Bacillota</taxon>
        <taxon>Bacilli</taxon>
        <taxon>Lactobacillales</taxon>
        <taxon>Lactobacillaceae</taxon>
        <taxon>Limosilactobacillus</taxon>
    </lineage>
</organism>
<gene>
    <name evidence="1" type="primary">smpB</name>
    <name type="ordered locus">LAR_0390</name>
</gene>
<protein>
    <recommendedName>
        <fullName evidence="1">SsrA-binding protein</fullName>
    </recommendedName>
    <alternativeName>
        <fullName evidence="1">Small protein B</fullName>
    </alternativeName>
</protein>
<dbReference type="EMBL" id="AP007281">
    <property type="protein sequence ID" value="BAG24906.1"/>
    <property type="molecule type" value="Genomic_DNA"/>
</dbReference>
<dbReference type="RefSeq" id="WP_003666449.1">
    <property type="nucleotide sequence ID" value="NC_010609.1"/>
</dbReference>
<dbReference type="SMR" id="B2G624"/>
<dbReference type="GeneID" id="77192148"/>
<dbReference type="KEGG" id="lrf:LAR_0390"/>
<dbReference type="HOGENOM" id="CLU_108953_0_0_9"/>
<dbReference type="GO" id="GO:0005829">
    <property type="term" value="C:cytosol"/>
    <property type="evidence" value="ECO:0007669"/>
    <property type="project" value="TreeGrafter"/>
</dbReference>
<dbReference type="GO" id="GO:0003723">
    <property type="term" value="F:RNA binding"/>
    <property type="evidence" value="ECO:0007669"/>
    <property type="project" value="UniProtKB-UniRule"/>
</dbReference>
<dbReference type="GO" id="GO:0070929">
    <property type="term" value="P:trans-translation"/>
    <property type="evidence" value="ECO:0007669"/>
    <property type="project" value="UniProtKB-UniRule"/>
</dbReference>
<dbReference type="CDD" id="cd09294">
    <property type="entry name" value="SmpB"/>
    <property type="match status" value="1"/>
</dbReference>
<dbReference type="Gene3D" id="2.40.280.10">
    <property type="match status" value="1"/>
</dbReference>
<dbReference type="HAMAP" id="MF_00023">
    <property type="entry name" value="SmpB"/>
    <property type="match status" value="1"/>
</dbReference>
<dbReference type="InterPro" id="IPR023620">
    <property type="entry name" value="SmpB"/>
</dbReference>
<dbReference type="InterPro" id="IPR000037">
    <property type="entry name" value="SsrA-bd_prot"/>
</dbReference>
<dbReference type="InterPro" id="IPR020081">
    <property type="entry name" value="SsrA-bd_prot_CS"/>
</dbReference>
<dbReference type="NCBIfam" id="NF003843">
    <property type="entry name" value="PRK05422.1"/>
    <property type="match status" value="1"/>
</dbReference>
<dbReference type="NCBIfam" id="TIGR00086">
    <property type="entry name" value="smpB"/>
    <property type="match status" value="1"/>
</dbReference>
<dbReference type="PANTHER" id="PTHR30308:SF2">
    <property type="entry name" value="SSRA-BINDING PROTEIN"/>
    <property type="match status" value="1"/>
</dbReference>
<dbReference type="PANTHER" id="PTHR30308">
    <property type="entry name" value="TMRNA-BINDING COMPONENT OF TRANS-TRANSLATION TAGGING COMPLEX"/>
    <property type="match status" value="1"/>
</dbReference>
<dbReference type="Pfam" id="PF01668">
    <property type="entry name" value="SmpB"/>
    <property type="match status" value="1"/>
</dbReference>
<dbReference type="SUPFAM" id="SSF74982">
    <property type="entry name" value="Small protein B (SmpB)"/>
    <property type="match status" value="1"/>
</dbReference>
<dbReference type="PROSITE" id="PS01317">
    <property type="entry name" value="SSRP"/>
    <property type="match status" value="1"/>
</dbReference>
<proteinExistence type="inferred from homology"/>
<comment type="function">
    <text evidence="1">Required for rescue of stalled ribosomes mediated by trans-translation. Binds to transfer-messenger RNA (tmRNA), required for stable association of tmRNA with ribosomes. tmRNA and SmpB together mimic tRNA shape, replacing the anticodon stem-loop with SmpB. tmRNA is encoded by the ssrA gene; the 2 termini fold to resemble tRNA(Ala) and it encodes a 'tag peptide', a short internal open reading frame. During trans-translation Ala-aminoacylated tmRNA acts like a tRNA, entering the A-site of stalled ribosomes, displacing the stalled mRNA. The ribosome then switches to translate the ORF on the tmRNA; the nascent peptide is terminated with the 'tag peptide' encoded by the tmRNA and targeted for degradation. The ribosome is freed to recommence translation, which seems to be the essential function of trans-translation.</text>
</comment>
<comment type="subcellular location">
    <subcellularLocation>
        <location evidence="1">Cytoplasm</location>
    </subcellularLocation>
    <text evidence="1">The tmRNA-SmpB complex associates with stalled 70S ribosomes.</text>
</comment>
<comment type="similarity">
    <text evidence="1">Belongs to the SmpB family.</text>
</comment>
<reference key="1">
    <citation type="journal article" date="2008" name="DNA Res.">
        <title>Comparative genome analysis of Lactobacillus reuteri and Lactobacillus fermentum reveal a genomic island for reuterin and cobalamin production.</title>
        <authorList>
            <person name="Morita H."/>
            <person name="Toh H."/>
            <person name="Fukuda S."/>
            <person name="Horikawa H."/>
            <person name="Oshima K."/>
            <person name="Suzuki T."/>
            <person name="Murakami M."/>
            <person name="Hisamatsu S."/>
            <person name="Kato Y."/>
            <person name="Takizawa T."/>
            <person name="Fukuoka H."/>
            <person name="Yoshimura T."/>
            <person name="Itoh K."/>
            <person name="O'Sullivan D.J."/>
            <person name="McKay L.L."/>
            <person name="Ohno H."/>
            <person name="Kikuchi J."/>
            <person name="Masaoka T."/>
            <person name="Hattori M."/>
        </authorList>
    </citation>
    <scope>NUCLEOTIDE SEQUENCE [LARGE SCALE GENOMIC DNA]</scope>
    <source>
        <strain>JCM 1112</strain>
    </source>
</reference>
<sequence>MAKKSHQENNDNLIAQNKKARHDYFVTDTVEAGLVLTGTEIKSVRAHRVNLKDGFAQVRNGEAWLMNVHISEYDNGTYFNQDPLRNRKLLLHKKEINKLVGALQDKGVTLIPLKMYIKHGYAKVLLGLAKGKHQYDKREAIKRREQNREIERVMKHY</sequence>